<evidence type="ECO:0000255" key="1">
    <source>
        <dbReference type="HAMAP-Rule" id="MF_01382"/>
    </source>
</evidence>
<dbReference type="EC" id="7.4.2.8" evidence="1"/>
<dbReference type="EMBL" id="CP000969">
    <property type="protein sequence ID" value="ACB09585.1"/>
    <property type="molecule type" value="Genomic_DNA"/>
</dbReference>
<dbReference type="RefSeq" id="WP_012311020.1">
    <property type="nucleotide sequence ID" value="NC_010483.1"/>
</dbReference>
<dbReference type="SMR" id="B1LB87"/>
<dbReference type="KEGG" id="trq:TRQ2_1241"/>
<dbReference type="HOGENOM" id="CLU_005314_3_0_0"/>
<dbReference type="Proteomes" id="UP000001687">
    <property type="component" value="Chromosome"/>
</dbReference>
<dbReference type="GO" id="GO:0031522">
    <property type="term" value="C:cell envelope Sec protein transport complex"/>
    <property type="evidence" value="ECO:0007669"/>
    <property type="project" value="TreeGrafter"/>
</dbReference>
<dbReference type="GO" id="GO:0005829">
    <property type="term" value="C:cytosol"/>
    <property type="evidence" value="ECO:0007669"/>
    <property type="project" value="TreeGrafter"/>
</dbReference>
<dbReference type="GO" id="GO:0005886">
    <property type="term" value="C:plasma membrane"/>
    <property type="evidence" value="ECO:0007669"/>
    <property type="project" value="UniProtKB-SubCell"/>
</dbReference>
<dbReference type="GO" id="GO:0005524">
    <property type="term" value="F:ATP binding"/>
    <property type="evidence" value="ECO:0007669"/>
    <property type="project" value="UniProtKB-UniRule"/>
</dbReference>
<dbReference type="GO" id="GO:0008564">
    <property type="term" value="F:protein-exporting ATPase activity"/>
    <property type="evidence" value="ECO:0007669"/>
    <property type="project" value="UniProtKB-EC"/>
</dbReference>
<dbReference type="GO" id="GO:0065002">
    <property type="term" value="P:intracellular protein transmembrane transport"/>
    <property type="evidence" value="ECO:0007669"/>
    <property type="project" value="UniProtKB-UniRule"/>
</dbReference>
<dbReference type="GO" id="GO:0017038">
    <property type="term" value="P:protein import"/>
    <property type="evidence" value="ECO:0007669"/>
    <property type="project" value="InterPro"/>
</dbReference>
<dbReference type="GO" id="GO:0006605">
    <property type="term" value="P:protein targeting"/>
    <property type="evidence" value="ECO:0007669"/>
    <property type="project" value="UniProtKB-UniRule"/>
</dbReference>
<dbReference type="GO" id="GO:0043952">
    <property type="term" value="P:protein transport by the Sec complex"/>
    <property type="evidence" value="ECO:0007669"/>
    <property type="project" value="TreeGrafter"/>
</dbReference>
<dbReference type="CDD" id="cd17928">
    <property type="entry name" value="DEXDc_SecA"/>
    <property type="match status" value="1"/>
</dbReference>
<dbReference type="CDD" id="cd18803">
    <property type="entry name" value="SF2_C_secA"/>
    <property type="match status" value="1"/>
</dbReference>
<dbReference type="FunFam" id="3.40.50.300:FF:000694">
    <property type="entry name" value="Preprotein translocase subunit SecA"/>
    <property type="match status" value="1"/>
</dbReference>
<dbReference type="FunFam" id="3.40.50.300:FF:003148">
    <property type="entry name" value="Protein translocase subunit SecA"/>
    <property type="match status" value="1"/>
</dbReference>
<dbReference type="Gene3D" id="1.10.3060.10">
    <property type="entry name" value="Helical scaffold and wing domains of SecA"/>
    <property type="match status" value="1"/>
</dbReference>
<dbReference type="Gene3D" id="3.40.50.300">
    <property type="entry name" value="P-loop containing nucleotide triphosphate hydrolases"/>
    <property type="match status" value="3"/>
</dbReference>
<dbReference type="HAMAP" id="MF_01382">
    <property type="entry name" value="SecA"/>
    <property type="match status" value="1"/>
</dbReference>
<dbReference type="InterPro" id="IPR014001">
    <property type="entry name" value="Helicase_ATP-bd"/>
</dbReference>
<dbReference type="InterPro" id="IPR001650">
    <property type="entry name" value="Helicase_C-like"/>
</dbReference>
<dbReference type="InterPro" id="IPR027417">
    <property type="entry name" value="P-loop_NTPase"/>
</dbReference>
<dbReference type="InterPro" id="IPR000185">
    <property type="entry name" value="SecA"/>
</dbReference>
<dbReference type="InterPro" id="IPR020937">
    <property type="entry name" value="SecA_CS"/>
</dbReference>
<dbReference type="InterPro" id="IPR011115">
    <property type="entry name" value="SecA_DEAD"/>
</dbReference>
<dbReference type="InterPro" id="IPR014018">
    <property type="entry name" value="SecA_motor_DEAD"/>
</dbReference>
<dbReference type="InterPro" id="IPR011130">
    <property type="entry name" value="SecA_preprotein_X-link_dom"/>
</dbReference>
<dbReference type="InterPro" id="IPR044722">
    <property type="entry name" value="SecA_SF2_C"/>
</dbReference>
<dbReference type="InterPro" id="IPR011116">
    <property type="entry name" value="SecA_Wing/Scaffold"/>
</dbReference>
<dbReference type="InterPro" id="IPR036266">
    <property type="entry name" value="SecA_Wing/Scaffold_sf"/>
</dbReference>
<dbReference type="InterPro" id="IPR036670">
    <property type="entry name" value="SecA_X-link_sf"/>
</dbReference>
<dbReference type="PANTHER" id="PTHR30612:SF0">
    <property type="entry name" value="CHLOROPLAST PROTEIN-TRANSPORTING ATPASE"/>
    <property type="match status" value="1"/>
</dbReference>
<dbReference type="PANTHER" id="PTHR30612">
    <property type="entry name" value="SECA INNER MEMBRANE COMPONENT OF SEC PROTEIN SECRETION SYSTEM"/>
    <property type="match status" value="1"/>
</dbReference>
<dbReference type="Pfam" id="PF21090">
    <property type="entry name" value="P-loop_SecA"/>
    <property type="match status" value="2"/>
</dbReference>
<dbReference type="Pfam" id="PF07517">
    <property type="entry name" value="SecA_DEAD"/>
    <property type="match status" value="1"/>
</dbReference>
<dbReference type="Pfam" id="PF01043">
    <property type="entry name" value="SecA_PP_bind"/>
    <property type="match status" value="1"/>
</dbReference>
<dbReference type="Pfam" id="PF07516">
    <property type="entry name" value="SecA_SW"/>
    <property type="match status" value="1"/>
</dbReference>
<dbReference type="PRINTS" id="PR00906">
    <property type="entry name" value="SECA"/>
</dbReference>
<dbReference type="SMART" id="SM00957">
    <property type="entry name" value="SecA_DEAD"/>
    <property type="match status" value="1"/>
</dbReference>
<dbReference type="SMART" id="SM00958">
    <property type="entry name" value="SecA_PP_bind"/>
    <property type="match status" value="1"/>
</dbReference>
<dbReference type="SUPFAM" id="SSF81886">
    <property type="entry name" value="Helical scaffold and wing domains of SecA"/>
    <property type="match status" value="1"/>
</dbReference>
<dbReference type="SUPFAM" id="SSF52540">
    <property type="entry name" value="P-loop containing nucleoside triphosphate hydrolases"/>
    <property type="match status" value="2"/>
</dbReference>
<dbReference type="SUPFAM" id="SSF81767">
    <property type="entry name" value="Pre-protein crosslinking domain of SecA"/>
    <property type="match status" value="1"/>
</dbReference>
<dbReference type="PROSITE" id="PS01312">
    <property type="entry name" value="SECA"/>
    <property type="match status" value="1"/>
</dbReference>
<dbReference type="PROSITE" id="PS51196">
    <property type="entry name" value="SECA_MOTOR_DEAD"/>
    <property type="match status" value="1"/>
</dbReference>
<accession>B1LB87</accession>
<proteinExistence type="inferred from homology"/>
<name>SECA_THESQ</name>
<gene>
    <name evidence="1" type="primary">secA</name>
    <name type="ordered locus">TRQ2_1241</name>
</gene>
<reference key="1">
    <citation type="journal article" date="2011" name="J. Bacteriol.">
        <title>Genome sequence of Thermotoga sp. strain RQ2, a hyperthermophilic bacterium isolated from a geothermally heated region of the seafloor near Ribeira Quente, the Azores.</title>
        <authorList>
            <person name="Swithers K.S."/>
            <person name="DiPippo J.L."/>
            <person name="Bruce D.C."/>
            <person name="Detter C."/>
            <person name="Tapia R."/>
            <person name="Han S."/>
            <person name="Saunders E."/>
            <person name="Goodwin L.A."/>
            <person name="Han J."/>
            <person name="Woyke T."/>
            <person name="Pitluck S."/>
            <person name="Pennacchio L."/>
            <person name="Nolan M."/>
            <person name="Mikhailova N."/>
            <person name="Lykidis A."/>
            <person name="Land M.L."/>
            <person name="Brettin T."/>
            <person name="Stetter K.O."/>
            <person name="Nelson K.E."/>
            <person name="Gogarten J.P."/>
            <person name="Noll K.M."/>
        </authorList>
    </citation>
    <scope>NUCLEOTIDE SEQUENCE [LARGE SCALE GENOMIC DNA]</scope>
    <source>
        <strain>RQ2</strain>
    </source>
</reference>
<protein>
    <recommendedName>
        <fullName evidence="1">Protein translocase subunit SecA</fullName>
        <ecNumber evidence="1">7.4.2.8</ecNumber>
    </recommendedName>
</protein>
<feature type="chain" id="PRO_1000145072" description="Protein translocase subunit SecA">
    <location>
        <begin position="1"/>
        <end position="871"/>
    </location>
</feature>
<feature type="binding site" evidence="1">
    <location>
        <position position="80"/>
    </location>
    <ligand>
        <name>ATP</name>
        <dbReference type="ChEBI" id="CHEBI:30616"/>
    </ligand>
</feature>
<feature type="binding site" evidence="1">
    <location>
        <begin position="98"/>
        <end position="102"/>
    </location>
    <ligand>
        <name>ATP</name>
        <dbReference type="ChEBI" id="CHEBI:30616"/>
    </ligand>
</feature>
<feature type="binding site" evidence="1">
    <location>
        <position position="537"/>
    </location>
    <ligand>
        <name>ATP</name>
        <dbReference type="ChEBI" id="CHEBI:30616"/>
    </ligand>
</feature>
<sequence length="871" mass="100498">MILFDKNKRILKKYAKMVSKINQIESDLRSKKNSELIRLSMVLKEKVNSFEDADEHLFEAFALVREAARRTLGMRPFDVQVMGGIALHEGKVAEMKTGEGKTLAATMPIYLNALIGKGVHLVTVNDYLARRDALWMGPVYLFLGLRVGVINSLGKSYEVVWKNPDLARKAIEENWSVWPDGFNGEVLKEESMNKEAVEAFQVELKEITRKEAYLCDVTYGTNNEFGFDYLRDNLVLDYNDKVQRGHFYAIVDEADSVLIDEARTPLIISGPSKESPSVYRRFAQIAKKFVKDKDFTVDEKARTIILTEEGVAKAEKIIGVENLYDPGNVSLLYHLINALKALHLFKKDVDYVVMNGEVIIVDEFTGRLLPGRRYSGGLHQAIEAKEGVPIKEESITYATITFQNYFRMYEKLAGMTGTAKTEESEFVQVYGMEVVVIPTHKPMIRKDHDDLVFRTQKEKYEKIVEEIEKRYKKGQPVLVGTTSIEKSELLSSILKKKGIPHQVLNAKYHEKEAEIVAKAGQKGMVTIATNMAGRGTDIKLGPGVAELGGLCIIGTERHESRRIDNQLRGRTGRQGDPGESIFFLSLEDDLLRIFGSEQIGKVMNILKIEEGQPIQHPMLSKLIENIQKKVEGINFSIRKTLMEMDDVLDKQRRAVYSLRDQILLEKDYDEYLKDIFEDVVSTRVEEFCSGKNWDIESLKNSLSFFPAGLFDLDEKQFSSSEELHDYLFNRLWEEYQRKKQEIGEDYRKVIRFLMLRIIDDHWRRYLEEVEHVKEAVQLRSYGQKDPIVEFKKETYYMFDEMMRRINDTIANYVLRVVKVSEKDEKEAKEELGKIRLVHEEFNLVNRAMRRATEKKKKKDGLHSFGRIRVKR</sequence>
<keyword id="KW-0067">ATP-binding</keyword>
<keyword id="KW-0997">Cell inner membrane</keyword>
<keyword id="KW-1003">Cell membrane</keyword>
<keyword id="KW-0963">Cytoplasm</keyword>
<keyword id="KW-0472">Membrane</keyword>
<keyword id="KW-0547">Nucleotide-binding</keyword>
<keyword id="KW-0653">Protein transport</keyword>
<keyword id="KW-1278">Translocase</keyword>
<keyword id="KW-0811">Translocation</keyword>
<keyword id="KW-0813">Transport</keyword>
<organism>
    <name type="scientific">Thermotoga sp. (strain RQ2)</name>
    <dbReference type="NCBI Taxonomy" id="126740"/>
    <lineage>
        <taxon>Bacteria</taxon>
        <taxon>Thermotogati</taxon>
        <taxon>Thermotogota</taxon>
        <taxon>Thermotogae</taxon>
        <taxon>Thermotogales</taxon>
        <taxon>Thermotogaceae</taxon>
        <taxon>Thermotoga</taxon>
    </lineage>
</organism>
<comment type="function">
    <text evidence="1">Part of the Sec protein translocase complex. Interacts with the SecYEG preprotein conducting channel. Has a central role in coupling the hydrolysis of ATP to the transfer of proteins into and across the cell membrane, serving as an ATP-driven molecular motor driving the stepwise translocation of polypeptide chains across the membrane.</text>
</comment>
<comment type="catalytic activity">
    <reaction evidence="1">
        <text>ATP + H2O + cellular proteinSide 1 = ADP + phosphate + cellular proteinSide 2.</text>
        <dbReference type="EC" id="7.4.2.8"/>
    </reaction>
</comment>
<comment type="subunit">
    <text evidence="1">Monomer and homodimer. Part of the essential Sec protein translocation apparatus which comprises SecA, SecYEG and auxiliary proteins SecDF. Other proteins may also be involved.</text>
</comment>
<comment type="subcellular location">
    <subcellularLocation>
        <location evidence="1">Cell inner membrane</location>
        <topology evidence="1">Peripheral membrane protein</topology>
        <orientation evidence="1">Cytoplasmic side</orientation>
    </subcellularLocation>
    <subcellularLocation>
        <location evidence="1">Cytoplasm</location>
    </subcellularLocation>
    <text evidence="1">Distribution is 50-50.</text>
</comment>
<comment type="similarity">
    <text evidence="1">Belongs to the SecA family.</text>
</comment>